<evidence type="ECO:0000255" key="1">
    <source>
        <dbReference type="HAMAP-Rule" id="MF_01554"/>
    </source>
</evidence>
<accession>A1T554</accession>
<keyword id="KW-0413">Isomerase</keyword>
<keyword id="KW-0460">Magnesium</keyword>
<keyword id="KW-0479">Metal-binding</keyword>
<keyword id="KW-0597">Phosphoprotein</keyword>
<proteinExistence type="inferred from homology"/>
<comment type="function">
    <text evidence="1">Catalyzes the conversion of glucosamine-6-phosphate to glucosamine-1-phosphate.</text>
</comment>
<comment type="catalytic activity">
    <reaction evidence="1">
        <text>alpha-D-glucosamine 1-phosphate = D-glucosamine 6-phosphate</text>
        <dbReference type="Rhea" id="RHEA:23424"/>
        <dbReference type="ChEBI" id="CHEBI:58516"/>
        <dbReference type="ChEBI" id="CHEBI:58725"/>
        <dbReference type="EC" id="5.4.2.10"/>
    </reaction>
</comment>
<comment type="cofactor">
    <cofactor evidence="1">
        <name>Mg(2+)</name>
        <dbReference type="ChEBI" id="CHEBI:18420"/>
    </cofactor>
    <text evidence="1">Binds 1 Mg(2+) ion per subunit.</text>
</comment>
<comment type="PTM">
    <text evidence="1">Activated by phosphorylation.</text>
</comment>
<comment type="similarity">
    <text evidence="1">Belongs to the phosphohexose mutase family.</text>
</comment>
<gene>
    <name evidence="1" type="primary">glmM</name>
    <name type="ordered locus">Mvan_1472</name>
</gene>
<feature type="chain" id="PRO_0000301345" description="Phosphoglucosamine mutase">
    <location>
        <begin position="1"/>
        <end position="445"/>
    </location>
</feature>
<feature type="active site" description="Phosphoserine intermediate" evidence="1">
    <location>
        <position position="102"/>
    </location>
</feature>
<feature type="binding site" description="via phosphate group" evidence="1">
    <location>
        <position position="102"/>
    </location>
    <ligand>
        <name>Mg(2+)</name>
        <dbReference type="ChEBI" id="CHEBI:18420"/>
    </ligand>
</feature>
<feature type="binding site" evidence="1">
    <location>
        <position position="240"/>
    </location>
    <ligand>
        <name>Mg(2+)</name>
        <dbReference type="ChEBI" id="CHEBI:18420"/>
    </ligand>
</feature>
<feature type="binding site" evidence="1">
    <location>
        <position position="242"/>
    </location>
    <ligand>
        <name>Mg(2+)</name>
        <dbReference type="ChEBI" id="CHEBI:18420"/>
    </ligand>
</feature>
<feature type="binding site" evidence="1">
    <location>
        <position position="244"/>
    </location>
    <ligand>
        <name>Mg(2+)</name>
        <dbReference type="ChEBI" id="CHEBI:18420"/>
    </ligand>
</feature>
<feature type="modified residue" description="Phosphoserine" evidence="1">
    <location>
        <position position="102"/>
    </location>
</feature>
<sequence length="445" mass="46106">MARLFGTDGVRGVANRELTAELAMALGAAAARRLGRTGAARRRVAVVGRDPRASGEMLEAAVIAGIASEGVDTLRVGVLPTPAVAYLTSAYDADFGVMISASHNPMPDNGIKIFGPGGHKLDDATEDRIEELVHQGPGSRPTGAGIGRVVDAEDALERYLRHVGKAATTRLDALTVVVDCAHGAASLAAPRAYRAAGANVIPIHAEPDGLNINDNCGSTHMQALSAAVVSYGADLGLAHDGDADRCLAVDAHGRVIDGDAIMVVLALAMQEAGELASDTLVTTVMSNMGLHLAMRSAGIEVRTTGVGDRYVLEELRAGLFSLGGEQSGHIVLPSFGTTGDGIVTGLRLMARMAQTGRSLAGLAEPMQTLPQVLINVEVADKATVADAQPVRDAVAQVEAELGDTGRILLRPSGTEQVVRVMVEAADEDTARQMAVRVAESVSAQR</sequence>
<name>GLMM_MYCVP</name>
<organism>
    <name type="scientific">Mycolicibacterium vanbaalenii (strain DSM 7251 / JCM 13017 / BCRC 16820 / KCTC 9966 / NRRL B-24157 / PYR-1)</name>
    <name type="common">Mycobacterium vanbaalenii</name>
    <dbReference type="NCBI Taxonomy" id="350058"/>
    <lineage>
        <taxon>Bacteria</taxon>
        <taxon>Bacillati</taxon>
        <taxon>Actinomycetota</taxon>
        <taxon>Actinomycetes</taxon>
        <taxon>Mycobacteriales</taxon>
        <taxon>Mycobacteriaceae</taxon>
        <taxon>Mycolicibacterium</taxon>
    </lineage>
</organism>
<dbReference type="EC" id="5.4.2.10" evidence="1"/>
<dbReference type="EMBL" id="CP000511">
    <property type="protein sequence ID" value="ABM12304.1"/>
    <property type="molecule type" value="Genomic_DNA"/>
</dbReference>
<dbReference type="RefSeq" id="WP_011778730.1">
    <property type="nucleotide sequence ID" value="NZ_JACKSD010000152.1"/>
</dbReference>
<dbReference type="SMR" id="A1T554"/>
<dbReference type="STRING" id="350058.Mvan_1472"/>
<dbReference type="KEGG" id="mva:Mvan_1472"/>
<dbReference type="eggNOG" id="COG1109">
    <property type="taxonomic scope" value="Bacteria"/>
</dbReference>
<dbReference type="HOGENOM" id="CLU_016950_7_0_11"/>
<dbReference type="Proteomes" id="UP000009159">
    <property type="component" value="Chromosome"/>
</dbReference>
<dbReference type="GO" id="GO:0005829">
    <property type="term" value="C:cytosol"/>
    <property type="evidence" value="ECO:0007669"/>
    <property type="project" value="TreeGrafter"/>
</dbReference>
<dbReference type="GO" id="GO:0000287">
    <property type="term" value="F:magnesium ion binding"/>
    <property type="evidence" value="ECO:0007669"/>
    <property type="project" value="UniProtKB-UniRule"/>
</dbReference>
<dbReference type="GO" id="GO:0008966">
    <property type="term" value="F:phosphoglucosamine mutase activity"/>
    <property type="evidence" value="ECO:0007669"/>
    <property type="project" value="UniProtKB-UniRule"/>
</dbReference>
<dbReference type="GO" id="GO:0004615">
    <property type="term" value="F:phosphomannomutase activity"/>
    <property type="evidence" value="ECO:0007669"/>
    <property type="project" value="TreeGrafter"/>
</dbReference>
<dbReference type="GO" id="GO:0005975">
    <property type="term" value="P:carbohydrate metabolic process"/>
    <property type="evidence" value="ECO:0007669"/>
    <property type="project" value="InterPro"/>
</dbReference>
<dbReference type="GO" id="GO:0009252">
    <property type="term" value="P:peptidoglycan biosynthetic process"/>
    <property type="evidence" value="ECO:0007669"/>
    <property type="project" value="TreeGrafter"/>
</dbReference>
<dbReference type="GO" id="GO:0006048">
    <property type="term" value="P:UDP-N-acetylglucosamine biosynthetic process"/>
    <property type="evidence" value="ECO:0007669"/>
    <property type="project" value="TreeGrafter"/>
</dbReference>
<dbReference type="CDD" id="cd05802">
    <property type="entry name" value="GlmM"/>
    <property type="match status" value="1"/>
</dbReference>
<dbReference type="FunFam" id="3.30.310.50:FF:000001">
    <property type="entry name" value="Phosphoglucosamine mutase"/>
    <property type="match status" value="1"/>
</dbReference>
<dbReference type="FunFam" id="3.40.120.10:FF:000001">
    <property type="entry name" value="Phosphoglucosamine mutase"/>
    <property type="match status" value="1"/>
</dbReference>
<dbReference type="FunFam" id="3.40.120.10:FF:000002">
    <property type="entry name" value="Phosphoglucosamine mutase"/>
    <property type="match status" value="1"/>
</dbReference>
<dbReference type="Gene3D" id="3.40.120.10">
    <property type="entry name" value="Alpha-D-Glucose-1,6-Bisphosphate, subunit A, domain 3"/>
    <property type="match status" value="3"/>
</dbReference>
<dbReference type="Gene3D" id="3.30.310.50">
    <property type="entry name" value="Alpha-D-phosphohexomutase, C-terminal domain"/>
    <property type="match status" value="1"/>
</dbReference>
<dbReference type="HAMAP" id="MF_01554_B">
    <property type="entry name" value="GlmM_B"/>
    <property type="match status" value="1"/>
</dbReference>
<dbReference type="InterPro" id="IPR005844">
    <property type="entry name" value="A-D-PHexomutase_a/b/a-I"/>
</dbReference>
<dbReference type="InterPro" id="IPR016055">
    <property type="entry name" value="A-D-PHexomutase_a/b/a-I/II/III"/>
</dbReference>
<dbReference type="InterPro" id="IPR005845">
    <property type="entry name" value="A-D-PHexomutase_a/b/a-II"/>
</dbReference>
<dbReference type="InterPro" id="IPR005846">
    <property type="entry name" value="A-D-PHexomutase_a/b/a-III"/>
</dbReference>
<dbReference type="InterPro" id="IPR005843">
    <property type="entry name" value="A-D-PHexomutase_C"/>
</dbReference>
<dbReference type="InterPro" id="IPR036900">
    <property type="entry name" value="A-D-PHexomutase_C_sf"/>
</dbReference>
<dbReference type="InterPro" id="IPR016066">
    <property type="entry name" value="A-D-PHexomutase_CS"/>
</dbReference>
<dbReference type="InterPro" id="IPR005841">
    <property type="entry name" value="Alpha-D-phosphohexomutase_SF"/>
</dbReference>
<dbReference type="InterPro" id="IPR006352">
    <property type="entry name" value="GlmM_bact"/>
</dbReference>
<dbReference type="InterPro" id="IPR050060">
    <property type="entry name" value="Phosphoglucosamine_mutase"/>
</dbReference>
<dbReference type="NCBIfam" id="TIGR01455">
    <property type="entry name" value="glmM"/>
    <property type="match status" value="1"/>
</dbReference>
<dbReference type="PANTHER" id="PTHR42946:SF1">
    <property type="entry name" value="PHOSPHOGLUCOMUTASE (ALPHA-D-GLUCOSE-1,6-BISPHOSPHATE-DEPENDENT)"/>
    <property type="match status" value="1"/>
</dbReference>
<dbReference type="PANTHER" id="PTHR42946">
    <property type="entry name" value="PHOSPHOHEXOSE MUTASE"/>
    <property type="match status" value="1"/>
</dbReference>
<dbReference type="Pfam" id="PF02878">
    <property type="entry name" value="PGM_PMM_I"/>
    <property type="match status" value="1"/>
</dbReference>
<dbReference type="Pfam" id="PF02879">
    <property type="entry name" value="PGM_PMM_II"/>
    <property type="match status" value="1"/>
</dbReference>
<dbReference type="Pfam" id="PF02880">
    <property type="entry name" value="PGM_PMM_III"/>
    <property type="match status" value="1"/>
</dbReference>
<dbReference type="Pfam" id="PF00408">
    <property type="entry name" value="PGM_PMM_IV"/>
    <property type="match status" value="1"/>
</dbReference>
<dbReference type="PRINTS" id="PR00509">
    <property type="entry name" value="PGMPMM"/>
</dbReference>
<dbReference type="SUPFAM" id="SSF55957">
    <property type="entry name" value="Phosphoglucomutase, C-terminal domain"/>
    <property type="match status" value="1"/>
</dbReference>
<dbReference type="SUPFAM" id="SSF53738">
    <property type="entry name" value="Phosphoglucomutase, first 3 domains"/>
    <property type="match status" value="3"/>
</dbReference>
<dbReference type="PROSITE" id="PS00710">
    <property type="entry name" value="PGM_PMM"/>
    <property type="match status" value="1"/>
</dbReference>
<reference key="1">
    <citation type="submission" date="2006-12" db="EMBL/GenBank/DDBJ databases">
        <title>Complete sequence of Mycobacterium vanbaalenii PYR-1.</title>
        <authorList>
            <consortium name="US DOE Joint Genome Institute"/>
            <person name="Copeland A."/>
            <person name="Lucas S."/>
            <person name="Lapidus A."/>
            <person name="Barry K."/>
            <person name="Detter J.C."/>
            <person name="Glavina del Rio T."/>
            <person name="Hammon N."/>
            <person name="Israni S."/>
            <person name="Dalin E."/>
            <person name="Tice H."/>
            <person name="Pitluck S."/>
            <person name="Singan V."/>
            <person name="Schmutz J."/>
            <person name="Larimer F."/>
            <person name="Land M."/>
            <person name="Hauser L."/>
            <person name="Kyrpides N."/>
            <person name="Anderson I.J."/>
            <person name="Miller C."/>
            <person name="Richardson P."/>
        </authorList>
    </citation>
    <scope>NUCLEOTIDE SEQUENCE [LARGE SCALE GENOMIC DNA]</scope>
    <source>
        <strain>DSM 7251 / JCM 13017 / BCRC 16820 / KCTC 9966 / NRRL B-24157 / PYR-1</strain>
    </source>
</reference>
<protein>
    <recommendedName>
        <fullName evidence="1">Phosphoglucosamine mutase</fullName>
        <ecNumber evidence="1">5.4.2.10</ecNumber>
    </recommendedName>
</protein>